<reference key="1">
    <citation type="journal article" date="1999" name="J. Neurosci. Res.">
        <title>Mouse beta 1,3-galactosyltransferase (GA1/GM1/GD1b synthase): protein characterization, tissue expression, and developmental regulation in neural retina.</title>
        <authorList>
            <person name="Daniotti J.L."/>
            <person name="Martina J.A."/>
            <person name="Zurita A.R."/>
            <person name="Maccioni H.J.F."/>
        </authorList>
    </citation>
    <scope>NUCLEOTIDE SEQUENCE [MRNA]</scope>
    <scope>FUNCTION</scope>
    <scope>CATALYTIC ACTIVITY</scope>
    <scope>TISSUE SPECIFICITY</scope>
    <scope>DEVELOPMENTAL STAGE</scope>
    <scope>SUBCELLULAR LOCATION</scope>
    <source>
        <tissue>Fetus</tissue>
    </source>
</reference>
<reference key="2">
    <citation type="submission" date="1998-12" db="EMBL/GenBank/DDBJ databases">
        <title>Sequence of the mouse major histocompatibility complex class II region.</title>
        <authorList>
            <person name="Rowen L."/>
            <person name="Qin S."/>
            <person name="Madan A."/>
            <person name="Loretz C."/>
            <person name="Hall J."/>
            <person name="James R."/>
            <person name="Dors M."/>
            <person name="Shaffer T."/>
            <person name="Abbasi N."/>
            <person name="Ratcliffe A."/>
            <person name="Dickhoff R."/>
            <person name="Lasky S."/>
            <person name="Hood L."/>
        </authorList>
    </citation>
    <scope>NUCLEOTIDE SEQUENCE [LARGE SCALE GENOMIC DNA]</scope>
    <source>
        <strain>129/SvJ</strain>
    </source>
</reference>
<reference key="3">
    <citation type="submission" date="2000-02" db="EMBL/GenBank/DDBJ databases">
        <title>Conspicuous differences among gene genealogies of 21 nuclear genes of five Mus musculus subspecies.</title>
        <authorList>
            <person name="Liu Y."/>
            <person name="Kitano T."/>
            <person name="Koide T."/>
            <person name="Shiroishi T."/>
            <person name="Moriwaki K."/>
            <person name="Saitou N."/>
        </authorList>
    </citation>
    <scope>NUCLEOTIDE SEQUENCE [GENOMIC DNA] OF 1-370</scope>
    <source>
        <strain>BFM/2Msf</strain>
        <strain>BLG2/Msf</strain>
        <strain>C57BL/10SnJ</strain>
        <strain>CAST/EiJ</strain>
        <strain>HMI/Msf</strain>
        <strain>MSM/Msf</strain>
        <strain>NJL/Msf</strain>
        <strain>Pgn2</strain>
        <strain>SWN/Msf</strain>
    </source>
</reference>
<sequence length="371" mass="41236">MPLSLFRRVLLAVLLLVIIWTLFGPSGLGEELLSLSLASLLPAPASPGPPLALPRLLISNSHACGGSGPPPFLLILVCTAPEHLNQRNAIRASWGAIREARGFRVQTLFLLGKPRRQQLADLSSESAAHRDILQASFQDSYRNLTLKTLSGLNWVNKYCPMARYILKTDDDVYVNVPELVSELIQRGGPSEQWQKGKEAQEETTAIHEEHRGQAVPLLYLGRVHWRVRPTRTPESRHHVSEELWPENWGPFPPYASGTGYVLSISAVQLILKVASRAPPLPLEDVFVGVSARRGGLAPTHCVKLAGATHYPLDRCCYGKFLLTSHKVDPWQMQEAWKLVSGMNGERTAPFCSWLQGFLGTLRCRFIAWFSS</sequence>
<evidence type="ECO:0000250" key="1">
    <source>
        <dbReference type="UniProtKB" id="O88178"/>
    </source>
</evidence>
<evidence type="ECO:0000255" key="2"/>
<evidence type="ECO:0000269" key="3">
    <source>
    </source>
</evidence>
<evidence type="ECO:0000305" key="4"/>
<evidence type="ECO:0000305" key="5">
    <source>
    </source>
</evidence>
<evidence type="ECO:0000312" key="6">
    <source>
        <dbReference type="MGI" id="MGI:1859517"/>
    </source>
</evidence>
<name>B3GT4_MOUSE</name>
<feature type="chain" id="PRO_0000219161" description="Beta-1,3-galactosyltransferase 4">
    <location>
        <begin position="1"/>
        <end position="371"/>
    </location>
</feature>
<feature type="topological domain" description="Cytoplasmic" evidence="2">
    <location>
        <begin position="1"/>
        <end position="4"/>
    </location>
</feature>
<feature type="transmembrane region" description="Helical; Signal-anchor for type II membrane protein" evidence="2">
    <location>
        <begin position="5"/>
        <end position="25"/>
    </location>
</feature>
<feature type="topological domain" description="Lumenal" evidence="2">
    <location>
        <begin position="26"/>
        <end position="371"/>
    </location>
</feature>
<feature type="glycosylation site" description="N-linked (GlcNAc...) asparagine" evidence="2">
    <location>
        <position position="143"/>
    </location>
</feature>
<feature type="sequence variant" description="In strain: pgn2.">
    <original>W</original>
    <variation>R</variation>
    <location>
        <position position="248"/>
    </location>
</feature>
<feature type="sequence variant" description="In strain: BLG2/Msf.">
    <original>G</original>
    <variation>W</variation>
    <location>
        <position position="344"/>
    </location>
</feature>
<gene>
    <name evidence="6" type="primary">B3galt4</name>
</gene>
<keyword id="KW-0325">Glycoprotein</keyword>
<keyword id="KW-0328">Glycosyltransferase</keyword>
<keyword id="KW-0333">Golgi apparatus</keyword>
<keyword id="KW-0443">Lipid metabolism</keyword>
<keyword id="KW-0472">Membrane</keyword>
<keyword id="KW-1185">Reference proteome</keyword>
<keyword id="KW-0735">Signal-anchor</keyword>
<keyword id="KW-0808">Transferase</keyword>
<keyword id="KW-0812">Transmembrane</keyword>
<keyword id="KW-1133">Transmembrane helix</keyword>
<accession>Q9Z0F0</accession>
<accession>Q91VC1</accession>
<accession>Q920U8</accession>
<accession>Q920U9</accession>
<proteinExistence type="evidence at protein level"/>
<protein>
    <recommendedName>
        <fullName evidence="4">Beta-1,3-galactosyltransferase 4</fullName>
        <shortName>Beta-1,3-GalTase 4</shortName>
        <shortName>Beta3Gal-T4</shortName>
        <shortName>Beta3GalT4</shortName>
        <shortName>b3Gal-T4</shortName>
        <ecNumber evidence="3">2.4.1.62</ecNumber>
    </recommendedName>
    <alternativeName>
        <fullName>Gal-T2</fullName>
    </alternativeName>
    <alternativeName>
        <fullName>Ganglioside galactosyltransferase</fullName>
    </alternativeName>
    <alternativeName>
        <fullName>UDP-galactose:beta-N-acetyl-galactosamine-beta-1,3-galactosyltransferase</fullName>
    </alternativeName>
</protein>
<comment type="function">
    <text evidence="3">Involved in GM1/GD1B/GA1 ganglioside biosynthesis.</text>
</comment>
<comment type="catalytic activity">
    <reaction evidence="3">
        <text>a ganglioside GM2 (d18:1(4E)) + UDP-alpha-D-galactose = a ganglioside GM1 (d18:1(4E)) + UDP + H(+)</text>
        <dbReference type="Rhea" id="RHEA:16773"/>
        <dbReference type="ChEBI" id="CHEBI:15378"/>
        <dbReference type="ChEBI" id="CHEBI:58223"/>
        <dbReference type="ChEBI" id="CHEBI:66914"/>
        <dbReference type="ChEBI" id="CHEBI:71502"/>
        <dbReference type="ChEBI" id="CHEBI:77709"/>
        <dbReference type="EC" id="2.4.1.62"/>
    </reaction>
    <physiologicalReaction direction="left-to-right" evidence="5">
        <dbReference type="Rhea" id="RHEA:16774"/>
    </physiologicalReaction>
</comment>
<comment type="catalytic activity">
    <reaction evidence="3">
        <text>a ganglioside GM2 + UDP-alpha-D-galactose = a ganglioside GM1 + UDP + H(+)</text>
        <dbReference type="Rhea" id="RHEA:48280"/>
        <dbReference type="ChEBI" id="CHEBI:15378"/>
        <dbReference type="ChEBI" id="CHEBI:58223"/>
        <dbReference type="ChEBI" id="CHEBI:66914"/>
        <dbReference type="ChEBI" id="CHEBI:79218"/>
        <dbReference type="ChEBI" id="CHEBI:82639"/>
    </reaction>
    <physiologicalReaction direction="left-to-right" evidence="5">
        <dbReference type="Rhea" id="RHEA:48281"/>
    </physiologicalReaction>
</comment>
<comment type="catalytic activity">
    <reaction evidence="1">
        <text>a ganglioside GD2 (d18:1(4E)) + UDP-alpha-D-galactose = a ganglioside GD1b (d18:1(4E)) + UDP + H(+)</text>
        <dbReference type="Rhea" id="RHEA:47568"/>
        <dbReference type="ChEBI" id="CHEBI:15378"/>
        <dbReference type="ChEBI" id="CHEBI:58223"/>
        <dbReference type="ChEBI" id="CHEBI:66914"/>
        <dbReference type="ChEBI" id="CHEBI:78542"/>
        <dbReference type="ChEBI" id="CHEBI:87785"/>
    </reaction>
    <physiologicalReaction direction="left-to-right" evidence="1">
        <dbReference type="Rhea" id="RHEA:47569"/>
    </physiologicalReaction>
</comment>
<comment type="catalytic activity">
    <reaction evidence="1">
        <text>a ganglioside GA2 (d18:1(4E)) + UDP-alpha-D-galactose = a ganglioside GA1 (d18:1(4E)) + UDP + H(+)</text>
        <dbReference type="Rhea" id="RHEA:41960"/>
        <dbReference type="ChEBI" id="CHEBI:15378"/>
        <dbReference type="ChEBI" id="CHEBI:27731"/>
        <dbReference type="ChEBI" id="CHEBI:27938"/>
        <dbReference type="ChEBI" id="CHEBI:58223"/>
        <dbReference type="ChEBI" id="CHEBI:66914"/>
    </reaction>
    <physiologicalReaction direction="left-to-right" evidence="1">
        <dbReference type="Rhea" id="RHEA:41961"/>
    </physiologicalReaction>
</comment>
<comment type="pathway">
    <text>Protein modification; protein glycosylation.</text>
</comment>
<comment type="subcellular location">
    <subcellularLocation>
        <location evidence="5">Golgi apparatus membrane</location>
        <topology evidence="2">Single-pass type II membrane protein</topology>
    </subcellularLocation>
</comment>
<comment type="tissue specificity">
    <text evidence="3">Expressed in heart, brain, spleen, kidney, lung and testis.</text>
</comment>
<comment type="developmental stage">
    <text evidence="3">First expressed at embryonic day 3. Maintained at high levels between days 4 and 7 and declines thereafter to stabilize at low levels after day 10.</text>
</comment>
<comment type="similarity">
    <text evidence="4">Belongs to the glycosyltransferase 31 family.</text>
</comment>
<comment type="online information" name="Functional Glycomics Gateway - GTase">
    <link uri="http://www.functionalglycomics.org/glycomics/molecule/jsp/glycoEnzyme/viewGlycoEnzyme.jsp?gbpId=gt_mou_457"/>
    <text>b3GalT4</text>
</comment>
<organism>
    <name type="scientific">Mus musculus</name>
    <name type="common">Mouse</name>
    <dbReference type="NCBI Taxonomy" id="10090"/>
    <lineage>
        <taxon>Eukaryota</taxon>
        <taxon>Metazoa</taxon>
        <taxon>Chordata</taxon>
        <taxon>Craniata</taxon>
        <taxon>Vertebrata</taxon>
        <taxon>Euteleostomi</taxon>
        <taxon>Mammalia</taxon>
        <taxon>Eutheria</taxon>
        <taxon>Euarchontoglires</taxon>
        <taxon>Glires</taxon>
        <taxon>Rodentia</taxon>
        <taxon>Myomorpha</taxon>
        <taxon>Muroidea</taxon>
        <taxon>Muridae</taxon>
        <taxon>Murinae</taxon>
        <taxon>Mus</taxon>
        <taxon>Mus</taxon>
    </lineage>
</organism>
<dbReference type="EC" id="2.4.1.62" evidence="3"/>
<dbReference type="EMBL" id="AF082504">
    <property type="protein sequence ID" value="AAC69622.1"/>
    <property type="molecule type" value="mRNA"/>
</dbReference>
<dbReference type="EMBL" id="AF110520">
    <property type="protein sequence ID" value="AAC97977.1"/>
    <property type="molecule type" value="Genomic_DNA"/>
</dbReference>
<dbReference type="EMBL" id="AF100956">
    <property type="protein sequence ID" value="AAC69897.1"/>
    <property type="molecule type" value="Genomic_DNA"/>
</dbReference>
<dbReference type="EMBL" id="AB039164">
    <property type="protein sequence ID" value="BAB68688.1"/>
    <property type="molecule type" value="Genomic_DNA"/>
</dbReference>
<dbReference type="EMBL" id="AB039165">
    <property type="protein sequence ID" value="BAB68689.1"/>
    <property type="molecule type" value="Genomic_DNA"/>
</dbReference>
<dbReference type="EMBL" id="AB039167">
    <property type="protein sequence ID" value="BAB68691.1"/>
    <property type="molecule type" value="Genomic_DNA"/>
</dbReference>
<dbReference type="EMBL" id="AB039168">
    <property type="protein sequence ID" value="BAB68692.1"/>
    <property type="molecule type" value="Genomic_DNA"/>
</dbReference>
<dbReference type="EMBL" id="AB039170">
    <property type="protein sequence ID" value="BAB68694.1"/>
    <property type="molecule type" value="Genomic_DNA"/>
</dbReference>
<dbReference type="EMBL" id="AB039171">
    <property type="protein sequence ID" value="BAB68695.1"/>
    <property type="molecule type" value="Genomic_DNA"/>
</dbReference>
<dbReference type="EMBL" id="AB039172">
    <property type="protein sequence ID" value="BAB68696.1"/>
    <property type="molecule type" value="Genomic_DNA"/>
</dbReference>
<dbReference type="EMBL" id="AB039169">
    <property type="protein sequence ID" value="BAB68693.1"/>
    <property type="molecule type" value="Genomic_DNA"/>
</dbReference>
<dbReference type="EMBL" id="AB039166">
    <property type="protein sequence ID" value="BAB68690.1"/>
    <property type="molecule type" value="Genomic_DNA"/>
</dbReference>
<dbReference type="CCDS" id="CCDS28638.1"/>
<dbReference type="RefSeq" id="NP_062293.1">
    <property type="nucleotide sequence ID" value="NM_019420.2"/>
</dbReference>
<dbReference type="SMR" id="Q9Z0F0"/>
<dbReference type="FunCoup" id="Q9Z0F0">
    <property type="interactions" value="308"/>
</dbReference>
<dbReference type="STRING" id="10090.ENSMUSP00000084823"/>
<dbReference type="SwissLipids" id="SLP:000001417"/>
<dbReference type="CAZy" id="GT31">
    <property type="family name" value="Glycosyltransferase Family 31"/>
</dbReference>
<dbReference type="GlyCosmos" id="Q9Z0F0">
    <property type="glycosylation" value="1 site, No reported glycans"/>
</dbReference>
<dbReference type="GlyGen" id="Q9Z0F0">
    <property type="glycosylation" value="1 site"/>
</dbReference>
<dbReference type="PhosphoSitePlus" id="Q9Z0F0"/>
<dbReference type="PaxDb" id="10090-ENSMUSP00000084823"/>
<dbReference type="ProteomicsDB" id="277169"/>
<dbReference type="Antibodypedia" id="29042">
    <property type="antibodies" value="118 antibodies from 25 providers"/>
</dbReference>
<dbReference type="DNASU" id="54218"/>
<dbReference type="Ensembl" id="ENSMUST00000087543.5">
    <property type="protein sequence ID" value="ENSMUSP00000084823.3"/>
    <property type="gene ID" value="ENSMUSG00000067370.5"/>
</dbReference>
<dbReference type="GeneID" id="54218"/>
<dbReference type="KEGG" id="mmu:54218"/>
<dbReference type="UCSC" id="uc008caj.2">
    <property type="organism name" value="mouse"/>
</dbReference>
<dbReference type="AGR" id="MGI:1859517"/>
<dbReference type="CTD" id="8705"/>
<dbReference type="MGI" id="MGI:1859517">
    <property type="gene designation" value="B3galt4"/>
</dbReference>
<dbReference type="VEuPathDB" id="HostDB:ENSMUSG00000067370"/>
<dbReference type="eggNOG" id="KOG2287">
    <property type="taxonomic scope" value="Eukaryota"/>
</dbReference>
<dbReference type="GeneTree" id="ENSGT00940000161798"/>
<dbReference type="HOGENOM" id="CLU_036849_1_0_1"/>
<dbReference type="InParanoid" id="Q9Z0F0"/>
<dbReference type="OMA" id="SHKLDPW"/>
<dbReference type="OrthoDB" id="2139606at2759"/>
<dbReference type="PhylomeDB" id="Q9Z0F0"/>
<dbReference type="TreeFam" id="TF318639"/>
<dbReference type="BRENDA" id="2.4.1.62">
    <property type="organism ID" value="3474"/>
</dbReference>
<dbReference type="Reactome" id="R-MMU-9037629">
    <property type="pathway name" value="Lewis blood group biosynthesis"/>
</dbReference>
<dbReference type="Reactome" id="R-MMU-9840309">
    <property type="pathway name" value="Glycosphingolipid biosynthesis"/>
</dbReference>
<dbReference type="UniPathway" id="UPA00378"/>
<dbReference type="BioGRID-ORCS" id="54218">
    <property type="hits" value="10 hits in 81 CRISPR screens"/>
</dbReference>
<dbReference type="PRO" id="PR:Q9Z0F0"/>
<dbReference type="Proteomes" id="UP000000589">
    <property type="component" value="Chromosome 17"/>
</dbReference>
<dbReference type="RNAct" id="Q9Z0F0">
    <property type="molecule type" value="protein"/>
</dbReference>
<dbReference type="Bgee" id="ENSMUSG00000067370">
    <property type="expression patterns" value="Expressed in pyloric antrum and 175 other cell types or tissues"/>
</dbReference>
<dbReference type="ExpressionAtlas" id="Q9Z0F0">
    <property type="expression patterns" value="baseline and differential"/>
</dbReference>
<dbReference type="GO" id="GO:0000139">
    <property type="term" value="C:Golgi membrane"/>
    <property type="evidence" value="ECO:0007669"/>
    <property type="project" value="UniProtKB-SubCell"/>
</dbReference>
<dbReference type="GO" id="GO:0047915">
    <property type="term" value="F:ganglioside galactosyltransferase activity"/>
    <property type="evidence" value="ECO:0007669"/>
    <property type="project" value="UniProtKB-EC"/>
</dbReference>
<dbReference type="GO" id="GO:0008499">
    <property type="term" value="F:N-acetyl-beta-D-glucosaminide beta-(1,3)-galactosyltransferase activity"/>
    <property type="evidence" value="ECO:0007669"/>
    <property type="project" value="Ensembl"/>
</dbReference>
<dbReference type="GO" id="GO:0001574">
    <property type="term" value="P:ganglioside biosynthetic process"/>
    <property type="evidence" value="ECO:0007669"/>
    <property type="project" value="Ensembl"/>
</dbReference>
<dbReference type="GO" id="GO:0006486">
    <property type="term" value="P:protein glycosylation"/>
    <property type="evidence" value="ECO:0007669"/>
    <property type="project" value="UniProtKB-UniPathway"/>
</dbReference>
<dbReference type="FunFam" id="3.90.550.50:FF:000050">
    <property type="entry name" value="Beta-1,3-galactosyltransferase 4"/>
    <property type="match status" value="1"/>
</dbReference>
<dbReference type="Gene3D" id="3.90.550.50">
    <property type="match status" value="1"/>
</dbReference>
<dbReference type="InterPro" id="IPR002659">
    <property type="entry name" value="Glyco_trans_31"/>
</dbReference>
<dbReference type="PANTHER" id="PTHR11214:SF378">
    <property type="entry name" value="BETA-1,3-GALACTOSYLTRANSFERASE 4"/>
    <property type="match status" value="1"/>
</dbReference>
<dbReference type="PANTHER" id="PTHR11214">
    <property type="entry name" value="BETA-1,3-N-ACETYLGLUCOSAMINYLTRANSFERASE"/>
    <property type="match status" value="1"/>
</dbReference>
<dbReference type="Pfam" id="PF01762">
    <property type="entry name" value="Galactosyl_T"/>
    <property type="match status" value="1"/>
</dbReference>